<organism>
    <name type="scientific">Acanthamoeba polyphaga mimivirus</name>
    <name type="common">APMV</name>
    <dbReference type="NCBI Taxonomy" id="212035"/>
    <lineage>
        <taxon>Viruses</taxon>
        <taxon>Varidnaviria</taxon>
        <taxon>Bamfordvirae</taxon>
        <taxon>Nucleocytoviricota</taxon>
        <taxon>Megaviricetes</taxon>
        <taxon>Imitervirales</taxon>
        <taxon>Mimiviridae</taxon>
        <taxon>Megamimivirinae</taxon>
        <taxon>Mimivirus</taxon>
        <taxon>Mimivirus bradfordmassiliense</taxon>
    </lineage>
</organism>
<organismHost>
    <name type="scientific">Acanthamoeba polyphaga</name>
    <name type="common">Amoeba</name>
    <dbReference type="NCBI Taxonomy" id="5757"/>
</organismHost>
<protein>
    <recommendedName>
        <fullName>Uncharacterized protein L432</fullName>
    </recommendedName>
</protein>
<feature type="chain" id="PRO_0000253267" description="Uncharacterized protein L432">
    <location>
        <begin position="1"/>
        <end position="219"/>
    </location>
</feature>
<feature type="domain" description="HD" evidence="1">
    <location>
        <begin position="57"/>
        <end position="158"/>
    </location>
</feature>
<dbReference type="EMBL" id="AY653733">
    <property type="protein sequence ID" value="AAV50701.1"/>
    <property type="molecule type" value="Genomic_DNA"/>
</dbReference>
<dbReference type="SMR" id="Q5UQN4"/>
<dbReference type="KEGG" id="vg:9925053"/>
<dbReference type="OrthoDB" id="14001at10239"/>
<dbReference type="Proteomes" id="UP000001134">
    <property type="component" value="Genome"/>
</dbReference>
<dbReference type="GO" id="GO:0016787">
    <property type="term" value="F:hydrolase activity"/>
    <property type="evidence" value="ECO:0007669"/>
    <property type="project" value="UniProtKB-KW"/>
</dbReference>
<dbReference type="CDD" id="cd00077">
    <property type="entry name" value="HDc"/>
    <property type="match status" value="1"/>
</dbReference>
<dbReference type="Gene3D" id="1.10.3210.10">
    <property type="entry name" value="Hypothetical protein af1432"/>
    <property type="match status" value="1"/>
</dbReference>
<dbReference type="InterPro" id="IPR003607">
    <property type="entry name" value="HD/PDEase_dom"/>
</dbReference>
<dbReference type="InterPro" id="IPR006674">
    <property type="entry name" value="HD_domain"/>
</dbReference>
<dbReference type="InterPro" id="IPR052567">
    <property type="entry name" value="OP_Dioxygenase"/>
</dbReference>
<dbReference type="PANTHER" id="PTHR40202">
    <property type="match status" value="1"/>
</dbReference>
<dbReference type="PANTHER" id="PTHR40202:SF1">
    <property type="entry name" value="HD DOMAIN-CONTAINING PROTEIN"/>
    <property type="match status" value="1"/>
</dbReference>
<dbReference type="Pfam" id="PF01966">
    <property type="entry name" value="HD"/>
    <property type="match status" value="1"/>
</dbReference>
<dbReference type="SUPFAM" id="SSF109604">
    <property type="entry name" value="HD-domain/PDEase-like"/>
    <property type="match status" value="1"/>
</dbReference>
<dbReference type="PROSITE" id="PS51831">
    <property type="entry name" value="HD"/>
    <property type="match status" value="1"/>
</dbReference>
<name>YL432_MIMIV</name>
<reference key="1">
    <citation type="journal article" date="2004" name="Science">
        <title>The 1.2-megabase genome sequence of Mimivirus.</title>
        <authorList>
            <person name="Raoult D."/>
            <person name="Audic S."/>
            <person name="Robert C."/>
            <person name="Abergel C."/>
            <person name="Renesto P."/>
            <person name="Ogata H."/>
            <person name="La Scola B."/>
            <person name="Susan M."/>
            <person name="Claverie J.-M."/>
        </authorList>
    </citation>
    <scope>NUCLEOTIDE SEQUENCE [LARGE SCALE GENOMIC DNA]</scope>
    <source>
        <strain>Rowbotham-Bradford</strain>
    </source>
</reference>
<sequence>MIFYIISLKIKLIRDYYKYNACIYNNNMEQIIQNVNTIINLYEQFGGSDYIGESQTQLEHMTRAAMLAEEFGEQNDIILAAFLHDIGHLIEINNDTIKMGSLGIMNHELIARDYLIEKGFDKDIANIIGNHVKAKRYLVTKYPEYKINLSEASRQTLLYQKNTMSQEEMTEFESDPLFNKSLKLRFYDDQSKLLSKSIKPLDYYRNLMIEYLSESTNNV</sequence>
<accession>Q5UQN4</accession>
<gene>
    <name type="ordered locus">MIMI_L432</name>
</gene>
<evidence type="ECO:0000255" key="1">
    <source>
        <dbReference type="PROSITE-ProRule" id="PRU01175"/>
    </source>
</evidence>
<proteinExistence type="predicted"/>
<keyword id="KW-0378">Hydrolase</keyword>
<keyword id="KW-1185">Reference proteome</keyword>